<dbReference type="EC" id="3.11.1.1" evidence="1"/>
<dbReference type="EMBL" id="CP001177">
    <property type="protein sequence ID" value="ACJ78844.1"/>
    <property type="molecule type" value="Genomic_DNA"/>
</dbReference>
<dbReference type="SMR" id="B7HK47"/>
<dbReference type="KEGG" id="bcr:BCAH187_A1480"/>
<dbReference type="HOGENOM" id="CLU_045011_12_0_9"/>
<dbReference type="Proteomes" id="UP000002214">
    <property type="component" value="Chromosome"/>
</dbReference>
<dbReference type="GO" id="GO:0005829">
    <property type="term" value="C:cytosol"/>
    <property type="evidence" value="ECO:0007669"/>
    <property type="project" value="TreeGrafter"/>
</dbReference>
<dbReference type="GO" id="GO:0000287">
    <property type="term" value="F:magnesium ion binding"/>
    <property type="evidence" value="ECO:0007669"/>
    <property type="project" value="UniProtKB-UniRule"/>
</dbReference>
<dbReference type="GO" id="GO:0008967">
    <property type="term" value="F:phosphoglycolate phosphatase activity"/>
    <property type="evidence" value="ECO:0007669"/>
    <property type="project" value="TreeGrafter"/>
</dbReference>
<dbReference type="GO" id="GO:0050194">
    <property type="term" value="F:phosphonoacetaldehyde hydrolase activity"/>
    <property type="evidence" value="ECO:0007669"/>
    <property type="project" value="UniProtKB-UniRule"/>
</dbReference>
<dbReference type="GO" id="GO:0006281">
    <property type="term" value="P:DNA repair"/>
    <property type="evidence" value="ECO:0007669"/>
    <property type="project" value="TreeGrafter"/>
</dbReference>
<dbReference type="GO" id="GO:0019700">
    <property type="term" value="P:organic phosphonate catabolic process"/>
    <property type="evidence" value="ECO:0007669"/>
    <property type="project" value="InterPro"/>
</dbReference>
<dbReference type="CDD" id="cd02586">
    <property type="entry name" value="HAD_PHN"/>
    <property type="match status" value="1"/>
</dbReference>
<dbReference type="FunFam" id="1.10.150.240:FF:000006">
    <property type="entry name" value="Phosphonoacetaldehyde hydrolase"/>
    <property type="match status" value="1"/>
</dbReference>
<dbReference type="FunFam" id="3.40.50.1000:FF:000072">
    <property type="entry name" value="Phosphonoacetaldehyde hydrolase"/>
    <property type="match status" value="1"/>
</dbReference>
<dbReference type="Gene3D" id="3.40.50.1000">
    <property type="entry name" value="HAD superfamily/HAD-like"/>
    <property type="match status" value="1"/>
</dbReference>
<dbReference type="Gene3D" id="1.10.150.240">
    <property type="entry name" value="Putative phosphatase, domain 2"/>
    <property type="match status" value="1"/>
</dbReference>
<dbReference type="HAMAP" id="MF_01375">
    <property type="entry name" value="PhnX"/>
    <property type="match status" value="1"/>
</dbReference>
<dbReference type="InterPro" id="IPR050155">
    <property type="entry name" value="HAD-like_hydrolase_sf"/>
</dbReference>
<dbReference type="InterPro" id="IPR036412">
    <property type="entry name" value="HAD-like_sf"/>
</dbReference>
<dbReference type="InterPro" id="IPR006439">
    <property type="entry name" value="HAD-SF_hydro_IA"/>
</dbReference>
<dbReference type="InterPro" id="IPR041492">
    <property type="entry name" value="HAD_2"/>
</dbReference>
<dbReference type="InterPro" id="IPR023214">
    <property type="entry name" value="HAD_sf"/>
</dbReference>
<dbReference type="InterPro" id="IPR023198">
    <property type="entry name" value="PGP-like_dom2"/>
</dbReference>
<dbReference type="InterPro" id="IPR006323">
    <property type="entry name" value="Phosphonoacetald_hydro"/>
</dbReference>
<dbReference type="NCBIfam" id="TIGR01549">
    <property type="entry name" value="HAD-SF-IA-v1"/>
    <property type="match status" value="1"/>
</dbReference>
<dbReference type="NCBIfam" id="TIGR01422">
    <property type="entry name" value="phosphonatase"/>
    <property type="match status" value="1"/>
</dbReference>
<dbReference type="PANTHER" id="PTHR43434">
    <property type="entry name" value="PHOSPHOGLYCOLATE PHOSPHATASE"/>
    <property type="match status" value="1"/>
</dbReference>
<dbReference type="PANTHER" id="PTHR43434:SF19">
    <property type="entry name" value="PHOSPHONOACETALDEHYDE HYDROLASE"/>
    <property type="match status" value="1"/>
</dbReference>
<dbReference type="Pfam" id="PF13419">
    <property type="entry name" value="HAD_2"/>
    <property type="match status" value="1"/>
</dbReference>
<dbReference type="SFLD" id="SFLDG01135">
    <property type="entry name" value="C1.5.6:_HAD__Beta-PGM__Phospha"/>
    <property type="match status" value="1"/>
</dbReference>
<dbReference type="SFLD" id="SFLDF00038">
    <property type="entry name" value="phosphonoacetaldehyde_hydrolas"/>
    <property type="match status" value="1"/>
</dbReference>
<dbReference type="SUPFAM" id="SSF56784">
    <property type="entry name" value="HAD-like"/>
    <property type="match status" value="1"/>
</dbReference>
<keyword id="KW-0378">Hydrolase</keyword>
<keyword id="KW-0460">Magnesium</keyword>
<keyword id="KW-0479">Metal-binding</keyword>
<keyword id="KW-0704">Schiff base</keyword>
<name>PHNX_BACC7</name>
<proteinExistence type="inferred from homology"/>
<gene>
    <name evidence="1" type="primary">phnX</name>
    <name type="ordered locus">BCAH187_A1480</name>
</gene>
<feature type="chain" id="PRO_1000144829" description="Phosphonoacetaldehyde hydrolase">
    <location>
        <begin position="1"/>
        <end position="264"/>
    </location>
</feature>
<feature type="active site" description="Nucleophile" evidence="1">
    <location>
        <position position="9"/>
    </location>
</feature>
<feature type="active site" description="Schiff-base intermediate with substrate" evidence="1">
    <location>
        <position position="50"/>
    </location>
</feature>
<feature type="binding site" evidence="1">
    <location>
        <position position="9"/>
    </location>
    <ligand>
        <name>Mg(2+)</name>
        <dbReference type="ChEBI" id="CHEBI:18420"/>
    </ligand>
</feature>
<feature type="binding site" evidence="1">
    <location>
        <position position="11"/>
    </location>
    <ligand>
        <name>Mg(2+)</name>
        <dbReference type="ChEBI" id="CHEBI:18420"/>
    </ligand>
</feature>
<feature type="binding site" evidence="1">
    <location>
        <position position="183"/>
    </location>
    <ligand>
        <name>Mg(2+)</name>
        <dbReference type="ChEBI" id="CHEBI:18420"/>
    </ligand>
</feature>
<comment type="function">
    <text evidence="1">Involved in phosphonate degradation.</text>
</comment>
<comment type="catalytic activity">
    <reaction evidence="1">
        <text>phosphonoacetaldehyde + H2O = acetaldehyde + phosphate + H(+)</text>
        <dbReference type="Rhea" id="RHEA:18905"/>
        <dbReference type="ChEBI" id="CHEBI:15343"/>
        <dbReference type="ChEBI" id="CHEBI:15377"/>
        <dbReference type="ChEBI" id="CHEBI:15378"/>
        <dbReference type="ChEBI" id="CHEBI:43474"/>
        <dbReference type="ChEBI" id="CHEBI:58383"/>
        <dbReference type="EC" id="3.11.1.1"/>
    </reaction>
</comment>
<comment type="cofactor">
    <cofactor evidence="1">
        <name>Mg(2+)</name>
        <dbReference type="ChEBI" id="CHEBI:18420"/>
    </cofactor>
    <text evidence="1">Binds 1 Mg(2+) ion per subunit.</text>
</comment>
<comment type="subunit">
    <text evidence="1">Homodimer.</text>
</comment>
<comment type="similarity">
    <text evidence="1">Belongs to the HAD-like hydrolase superfamily. PhnX family.</text>
</comment>
<sequence length="264" mass="30081">MKIEAVIFDWAGTTVDYGCFAPLEVFIKIFRKRGVKITDEEARKPMGLLKIDHVRALTEMPRIANEWERVFGHLPTEADIHEMYEEFEEILFTILPHYATPIDGVKEVVASLRKRGLKIGSTTGYTREMMDIVAKEAEIQGYKPDVLVTPDDVSAGRPYPWMCYKNAMELGVYPMNHMIKVGDTVSDMKEGRNAGMWTVGVILGSSELGLSEWAAETMDPVELREKMEVVRKRFVENGAHFTIETMQGLENVIEQIEKQEFIIS</sequence>
<protein>
    <recommendedName>
        <fullName evidence="1">Phosphonoacetaldehyde hydrolase</fullName>
        <shortName evidence="1">Phosphonatase</shortName>
        <ecNumber evidence="1">3.11.1.1</ecNumber>
    </recommendedName>
    <alternativeName>
        <fullName evidence="1">Phosphonoacetaldehyde phosphonohydrolase</fullName>
    </alternativeName>
</protein>
<accession>B7HK47</accession>
<evidence type="ECO:0000255" key="1">
    <source>
        <dbReference type="HAMAP-Rule" id="MF_01375"/>
    </source>
</evidence>
<organism>
    <name type="scientific">Bacillus cereus (strain AH187)</name>
    <dbReference type="NCBI Taxonomy" id="405534"/>
    <lineage>
        <taxon>Bacteria</taxon>
        <taxon>Bacillati</taxon>
        <taxon>Bacillota</taxon>
        <taxon>Bacilli</taxon>
        <taxon>Bacillales</taxon>
        <taxon>Bacillaceae</taxon>
        <taxon>Bacillus</taxon>
        <taxon>Bacillus cereus group</taxon>
    </lineage>
</organism>
<reference key="1">
    <citation type="submission" date="2008-10" db="EMBL/GenBank/DDBJ databases">
        <title>Genome sequence of Bacillus cereus AH187.</title>
        <authorList>
            <person name="Dodson R.J."/>
            <person name="Durkin A.S."/>
            <person name="Rosovitz M.J."/>
            <person name="Rasko D.A."/>
            <person name="Kolsto A.B."/>
            <person name="Okstad O.A."/>
            <person name="Ravel J."/>
            <person name="Sutton G."/>
        </authorList>
    </citation>
    <scope>NUCLEOTIDE SEQUENCE [LARGE SCALE GENOMIC DNA]</scope>
    <source>
        <strain>AH187</strain>
    </source>
</reference>